<name>OMPU_VIBC3</name>
<gene>
    <name type="primary">ompU</name>
    <name type="ordered locus">VC0395_A0162</name>
    <name type="ordered locus">VC395_0650</name>
</gene>
<evidence type="ECO:0000250" key="1"/>
<evidence type="ECO:0000255" key="2"/>
<evidence type="ECO:0000305" key="3"/>
<evidence type="ECO:0007829" key="4">
    <source>
        <dbReference type="PDB" id="6EHB"/>
    </source>
</evidence>
<keyword id="KW-0002">3D-structure</keyword>
<keyword id="KW-0998">Cell outer membrane</keyword>
<keyword id="KW-0406">Ion transport</keyword>
<keyword id="KW-0472">Membrane</keyword>
<keyword id="KW-0626">Porin</keyword>
<keyword id="KW-0732">Signal</keyword>
<keyword id="KW-0812">Transmembrane</keyword>
<keyword id="KW-1134">Transmembrane beta strand</keyword>
<keyword id="KW-0813">Transport</keyword>
<comment type="function">
    <text evidence="1">Forms pores that allow passive diffusion of small molecules across the outer membrane.</text>
</comment>
<comment type="subunit">
    <text evidence="1">Homotrimer.</text>
</comment>
<comment type="subcellular location">
    <subcellularLocation>
        <location>Cell outer membrane</location>
        <topology>Multi-pass membrane protein</topology>
    </subcellularLocation>
</comment>
<comment type="similarity">
    <text evidence="3">Belongs to the Gram-negative porin family.</text>
</comment>
<comment type="sequence caution" evidence="3">
    <conflict type="erroneous initiation">
        <sequence resource="EMBL-CDS" id="ABQ21305"/>
    </conflict>
</comment>
<comment type="sequence caution" evidence="3">
    <conflict type="erroneous initiation">
        <sequence resource="EMBL-CDS" id="ACP08668"/>
    </conflict>
</comment>
<reference key="1">
    <citation type="journal article" date="1996" name="Infect. Immun.">
        <title>Cloning and characterization of the gene encoding the OmpU outer membrane protein of Vibrio cholerae.</title>
        <authorList>
            <person name="Sperandio V."/>
            <person name="Bailey C.C."/>
            <person name="Giron J.A."/>
            <person name="DiRita V.J."/>
            <person name="Silveira W.D."/>
            <person name="Vettore A.L."/>
            <person name="Kaper J.B."/>
        </authorList>
    </citation>
    <scope>NUCLEOTIDE SEQUENCE [GENOMIC DNA]</scope>
</reference>
<reference key="2">
    <citation type="submission" date="2007-03" db="EMBL/GenBank/DDBJ databases">
        <authorList>
            <person name="Heidelberg J."/>
        </authorList>
    </citation>
    <scope>NUCLEOTIDE SEQUENCE [LARGE SCALE GENOMIC DNA]</scope>
    <source>
        <strain>ATCC 39541 / Classical Ogawa 395 / O395</strain>
    </source>
</reference>
<reference key="3">
    <citation type="journal article" date="2008" name="PLoS ONE">
        <title>A recalibrated molecular clock and independent origins for the cholera pandemic clones.</title>
        <authorList>
            <person name="Feng L."/>
            <person name="Reeves P.R."/>
            <person name="Lan R."/>
            <person name="Ren Y."/>
            <person name="Gao C."/>
            <person name="Zhou Z."/>
            <person name="Ren Y."/>
            <person name="Cheng J."/>
            <person name="Wang W."/>
            <person name="Wang J."/>
            <person name="Qian W."/>
            <person name="Li D."/>
            <person name="Wang L."/>
        </authorList>
    </citation>
    <scope>NUCLEOTIDE SEQUENCE [LARGE SCALE GENOMIC DNA]</scope>
    <source>
        <strain>ATCC 39541 / Classical Ogawa 395 / O395</strain>
    </source>
</reference>
<feature type="signal peptide" evidence="2">
    <location>
        <begin position="1"/>
        <end position="21"/>
    </location>
</feature>
<feature type="chain" id="PRO_0000324808" description="Outer membrane protein U">
    <location>
        <begin position="22"/>
        <end position="341"/>
    </location>
</feature>
<feature type="strand" evidence="4">
    <location>
        <begin position="33"/>
        <end position="37"/>
    </location>
</feature>
<feature type="strand" evidence="4">
    <location>
        <begin position="39"/>
        <end position="56"/>
    </location>
</feature>
<feature type="strand" evidence="4">
    <location>
        <begin position="59"/>
        <end position="62"/>
    </location>
</feature>
<feature type="strand" evidence="4">
    <location>
        <begin position="65"/>
        <end position="77"/>
    </location>
</feature>
<feature type="strand" evidence="4">
    <location>
        <begin position="80"/>
        <end position="90"/>
    </location>
</feature>
<feature type="strand" evidence="4">
    <location>
        <begin position="104"/>
        <end position="115"/>
    </location>
</feature>
<feature type="strand" evidence="4">
    <location>
        <begin position="118"/>
        <end position="126"/>
    </location>
</feature>
<feature type="helix" evidence="4">
    <location>
        <begin position="130"/>
        <end position="133"/>
    </location>
</feature>
<feature type="turn" evidence="4">
    <location>
        <begin position="134"/>
        <end position="136"/>
    </location>
</feature>
<feature type="strand" evidence="4">
    <location>
        <begin position="139"/>
        <end position="142"/>
    </location>
</feature>
<feature type="helix" evidence="4">
    <location>
        <begin position="151"/>
        <end position="153"/>
    </location>
</feature>
<feature type="strand" evidence="4">
    <location>
        <begin position="154"/>
        <end position="166"/>
    </location>
</feature>
<feature type="strand" evidence="4">
    <location>
        <begin position="169"/>
        <end position="176"/>
    </location>
</feature>
<feature type="strand" evidence="4">
    <location>
        <begin position="179"/>
        <end position="183"/>
    </location>
</feature>
<feature type="helix" evidence="4">
    <location>
        <begin position="192"/>
        <end position="194"/>
    </location>
</feature>
<feature type="strand" evidence="4">
    <location>
        <begin position="196"/>
        <end position="200"/>
    </location>
</feature>
<feature type="strand" evidence="4">
    <location>
        <begin position="205"/>
        <end position="213"/>
    </location>
</feature>
<feature type="strand" evidence="4">
    <location>
        <begin position="217"/>
        <end position="228"/>
    </location>
</feature>
<feature type="strand" evidence="4">
    <location>
        <begin position="231"/>
        <end position="241"/>
    </location>
</feature>
<feature type="strand" evidence="4">
    <location>
        <begin position="243"/>
        <end position="257"/>
    </location>
</feature>
<feature type="strand" evidence="4">
    <location>
        <begin position="260"/>
        <end position="273"/>
    </location>
</feature>
<feature type="strand" evidence="4">
    <location>
        <begin position="276"/>
        <end position="287"/>
    </location>
</feature>
<feature type="strand" evidence="4">
    <location>
        <begin position="290"/>
        <end position="305"/>
    </location>
</feature>
<feature type="strand" evidence="4">
    <location>
        <begin position="308"/>
        <end position="317"/>
    </location>
</feature>
<feature type="helix" evidence="4">
    <location>
        <begin position="327"/>
        <end position="329"/>
    </location>
</feature>
<feature type="strand" evidence="4">
    <location>
        <begin position="332"/>
        <end position="340"/>
    </location>
</feature>
<sequence>MNKTLIALAVSAAAVATGAYADGINQSGDKAGSTVYSAKGTSLEVGGRAEARLSLKDGKAQDNSRVRLNFLGKAEINDSLYGVGFYEGEFTTNDQGKNASNNSLDNRYTYAGIGGTYGEVTYGKNDGALGVITDFTDIMSYHGNTAAEKIAVADRVDNMLAYKGQFGDLGVKASYRFADRNAVDAMGNVVTETNAAKYSDNGEDGYSLSAIYTFGDTGFNVGAGYADQDDQNEYMLAASYRMENLYFAGLFTDGELAKDVDYTGYELAAGYKLGQAAFTATYNNAETAKKTSADNFAIDATYYFKPNFRSYISYQFNLLDSDKASKVASEDELAIGLRYDF</sequence>
<organism>
    <name type="scientific">Vibrio cholerae serotype O1 (strain ATCC 39541 / Classical Ogawa 395 / O395)</name>
    <dbReference type="NCBI Taxonomy" id="345073"/>
    <lineage>
        <taxon>Bacteria</taxon>
        <taxon>Pseudomonadati</taxon>
        <taxon>Pseudomonadota</taxon>
        <taxon>Gammaproteobacteria</taxon>
        <taxon>Vibrionales</taxon>
        <taxon>Vibrionaceae</taxon>
        <taxon>Vibrio</taxon>
    </lineage>
</organism>
<accession>A5F934</accession>
<accession>C3LXU4</accession>
<accession>P97085</accession>
<accession>Q9KU90</accession>
<accession>Q9L5A3</accession>
<protein>
    <recommendedName>
        <fullName>Outer membrane protein U</fullName>
    </recommendedName>
    <alternativeName>
        <fullName>Porin OmpU</fullName>
    </alternativeName>
</protein>
<dbReference type="EMBL" id="U73751">
    <property type="protein sequence ID" value="AAB48973.1"/>
    <property type="molecule type" value="Genomic_DNA"/>
</dbReference>
<dbReference type="EMBL" id="CP000627">
    <property type="protein sequence ID" value="ABQ21305.1"/>
    <property type="status" value="ALT_INIT"/>
    <property type="molecule type" value="Genomic_DNA"/>
</dbReference>
<dbReference type="EMBL" id="CP001235">
    <property type="protein sequence ID" value="ACP08668.1"/>
    <property type="status" value="ALT_INIT"/>
    <property type="molecule type" value="Genomic_DNA"/>
</dbReference>
<dbReference type="RefSeq" id="WP_001044324.1">
    <property type="nucleotide sequence ID" value="NZ_JAACZH010000006.1"/>
</dbReference>
<dbReference type="PDB" id="6EHB">
    <property type="method" value="X-ray"/>
    <property type="resolution" value="1.55 A"/>
    <property type="chains" value="A/B/C=22-341"/>
</dbReference>
<dbReference type="PDB" id="6EHC">
    <property type="method" value="X-ray"/>
    <property type="resolution" value="2.02 A"/>
    <property type="chains" value="A/B=33-341"/>
</dbReference>
<dbReference type="PDBsum" id="6EHB"/>
<dbReference type="PDBsum" id="6EHC"/>
<dbReference type="SMR" id="A5F934"/>
<dbReference type="KEGG" id="vco:VC0395_A0162"/>
<dbReference type="KEGG" id="vcr:VC395_0650"/>
<dbReference type="PATRIC" id="fig|345073.21.peg.631"/>
<dbReference type="eggNOG" id="COG3203">
    <property type="taxonomic scope" value="Bacteria"/>
</dbReference>
<dbReference type="HOGENOM" id="CLU_058202_1_2_6"/>
<dbReference type="Proteomes" id="UP000000249">
    <property type="component" value="Chromosome 2"/>
</dbReference>
<dbReference type="GO" id="GO:0009279">
    <property type="term" value="C:cell outer membrane"/>
    <property type="evidence" value="ECO:0007669"/>
    <property type="project" value="UniProtKB-SubCell"/>
</dbReference>
<dbReference type="GO" id="GO:0046930">
    <property type="term" value="C:pore complex"/>
    <property type="evidence" value="ECO:0007669"/>
    <property type="project" value="UniProtKB-KW"/>
</dbReference>
<dbReference type="GO" id="GO:0015288">
    <property type="term" value="F:porin activity"/>
    <property type="evidence" value="ECO:0007669"/>
    <property type="project" value="UniProtKB-KW"/>
</dbReference>
<dbReference type="GO" id="GO:0006811">
    <property type="term" value="P:monoatomic ion transport"/>
    <property type="evidence" value="ECO:0007669"/>
    <property type="project" value="UniProtKB-KW"/>
</dbReference>
<dbReference type="CDD" id="cd00342">
    <property type="entry name" value="gram_neg_porins"/>
    <property type="match status" value="1"/>
</dbReference>
<dbReference type="Gene3D" id="2.40.160.10">
    <property type="entry name" value="Porin"/>
    <property type="match status" value="1"/>
</dbReference>
<dbReference type="InterPro" id="IPR050298">
    <property type="entry name" value="Gram-neg_bact_OMP"/>
</dbReference>
<dbReference type="InterPro" id="IPR033900">
    <property type="entry name" value="Gram_neg_porin_domain"/>
</dbReference>
<dbReference type="InterPro" id="IPR023614">
    <property type="entry name" value="Porin_dom_sf"/>
</dbReference>
<dbReference type="PANTHER" id="PTHR34501:SF2">
    <property type="entry name" value="OUTER MEMBRANE PORIN F-RELATED"/>
    <property type="match status" value="1"/>
</dbReference>
<dbReference type="PANTHER" id="PTHR34501">
    <property type="entry name" value="PROTEIN YDDL-RELATED"/>
    <property type="match status" value="1"/>
</dbReference>
<dbReference type="Pfam" id="PF13609">
    <property type="entry name" value="Porin_4"/>
    <property type="match status" value="1"/>
</dbReference>
<dbReference type="SUPFAM" id="SSF56935">
    <property type="entry name" value="Porins"/>
    <property type="match status" value="1"/>
</dbReference>
<proteinExistence type="evidence at protein level"/>